<organism>
    <name type="scientific">Mus musculus</name>
    <name type="common">Mouse</name>
    <dbReference type="NCBI Taxonomy" id="10090"/>
    <lineage>
        <taxon>Eukaryota</taxon>
        <taxon>Metazoa</taxon>
        <taxon>Chordata</taxon>
        <taxon>Craniata</taxon>
        <taxon>Vertebrata</taxon>
        <taxon>Euteleostomi</taxon>
        <taxon>Mammalia</taxon>
        <taxon>Eutheria</taxon>
        <taxon>Euarchontoglires</taxon>
        <taxon>Glires</taxon>
        <taxon>Rodentia</taxon>
        <taxon>Myomorpha</taxon>
        <taxon>Muroidea</taxon>
        <taxon>Muridae</taxon>
        <taxon>Murinae</taxon>
        <taxon>Mus</taxon>
        <taxon>Mus</taxon>
    </lineage>
</organism>
<reference key="1">
    <citation type="journal article" date="2005" name="Science">
        <title>The transcriptional landscape of the mammalian genome.</title>
        <authorList>
            <person name="Carninci P."/>
            <person name="Kasukawa T."/>
            <person name="Katayama S."/>
            <person name="Gough J."/>
            <person name="Frith M.C."/>
            <person name="Maeda N."/>
            <person name="Oyama R."/>
            <person name="Ravasi T."/>
            <person name="Lenhard B."/>
            <person name="Wells C."/>
            <person name="Kodzius R."/>
            <person name="Shimokawa K."/>
            <person name="Bajic V.B."/>
            <person name="Brenner S.E."/>
            <person name="Batalov S."/>
            <person name="Forrest A.R."/>
            <person name="Zavolan M."/>
            <person name="Davis M.J."/>
            <person name="Wilming L.G."/>
            <person name="Aidinis V."/>
            <person name="Allen J.E."/>
            <person name="Ambesi-Impiombato A."/>
            <person name="Apweiler R."/>
            <person name="Aturaliya R.N."/>
            <person name="Bailey T.L."/>
            <person name="Bansal M."/>
            <person name="Baxter L."/>
            <person name="Beisel K.W."/>
            <person name="Bersano T."/>
            <person name="Bono H."/>
            <person name="Chalk A.M."/>
            <person name="Chiu K.P."/>
            <person name="Choudhary V."/>
            <person name="Christoffels A."/>
            <person name="Clutterbuck D.R."/>
            <person name="Crowe M.L."/>
            <person name="Dalla E."/>
            <person name="Dalrymple B.P."/>
            <person name="de Bono B."/>
            <person name="Della Gatta G."/>
            <person name="di Bernardo D."/>
            <person name="Down T."/>
            <person name="Engstrom P."/>
            <person name="Fagiolini M."/>
            <person name="Faulkner G."/>
            <person name="Fletcher C.F."/>
            <person name="Fukushima T."/>
            <person name="Furuno M."/>
            <person name="Futaki S."/>
            <person name="Gariboldi M."/>
            <person name="Georgii-Hemming P."/>
            <person name="Gingeras T.R."/>
            <person name="Gojobori T."/>
            <person name="Green R.E."/>
            <person name="Gustincich S."/>
            <person name="Harbers M."/>
            <person name="Hayashi Y."/>
            <person name="Hensch T.K."/>
            <person name="Hirokawa N."/>
            <person name="Hill D."/>
            <person name="Huminiecki L."/>
            <person name="Iacono M."/>
            <person name="Ikeo K."/>
            <person name="Iwama A."/>
            <person name="Ishikawa T."/>
            <person name="Jakt M."/>
            <person name="Kanapin A."/>
            <person name="Katoh M."/>
            <person name="Kawasawa Y."/>
            <person name="Kelso J."/>
            <person name="Kitamura H."/>
            <person name="Kitano H."/>
            <person name="Kollias G."/>
            <person name="Krishnan S.P."/>
            <person name="Kruger A."/>
            <person name="Kummerfeld S.K."/>
            <person name="Kurochkin I.V."/>
            <person name="Lareau L.F."/>
            <person name="Lazarevic D."/>
            <person name="Lipovich L."/>
            <person name="Liu J."/>
            <person name="Liuni S."/>
            <person name="McWilliam S."/>
            <person name="Madan Babu M."/>
            <person name="Madera M."/>
            <person name="Marchionni L."/>
            <person name="Matsuda H."/>
            <person name="Matsuzawa S."/>
            <person name="Miki H."/>
            <person name="Mignone F."/>
            <person name="Miyake S."/>
            <person name="Morris K."/>
            <person name="Mottagui-Tabar S."/>
            <person name="Mulder N."/>
            <person name="Nakano N."/>
            <person name="Nakauchi H."/>
            <person name="Ng P."/>
            <person name="Nilsson R."/>
            <person name="Nishiguchi S."/>
            <person name="Nishikawa S."/>
            <person name="Nori F."/>
            <person name="Ohara O."/>
            <person name="Okazaki Y."/>
            <person name="Orlando V."/>
            <person name="Pang K.C."/>
            <person name="Pavan W.J."/>
            <person name="Pavesi G."/>
            <person name="Pesole G."/>
            <person name="Petrovsky N."/>
            <person name="Piazza S."/>
            <person name="Reed J."/>
            <person name="Reid J.F."/>
            <person name="Ring B.Z."/>
            <person name="Ringwald M."/>
            <person name="Rost B."/>
            <person name="Ruan Y."/>
            <person name="Salzberg S.L."/>
            <person name="Sandelin A."/>
            <person name="Schneider C."/>
            <person name="Schoenbach C."/>
            <person name="Sekiguchi K."/>
            <person name="Semple C.A."/>
            <person name="Seno S."/>
            <person name="Sessa L."/>
            <person name="Sheng Y."/>
            <person name="Shibata Y."/>
            <person name="Shimada H."/>
            <person name="Shimada K."/>
            <person name="Silva D."/>
            <person name="Sinclair B."/>
            <person name="Sperling S."/>
            <person name="Stupka E."/>
            <person name="Sugiura K."/>
            <person name="Sultana R."/>
            <person name="Takenaka Y."/>
            <person name="Taki K."/>
            <person name="Tammoja K."/>
            <person name="Tan S.L."/>
            <person name="Tang S."/>
            <person name="Taylor M.S."/>
            <person name="Tegner J."/>
            <person name="Teichmann S.A."/>
            <person name="Ueda H.R."/>
            <person name="van Nimwegen E."/>
            <person name="Verardo R."/>
            <person name="Wei C.L."/>
            <person name="Yagi K."/>
            <person name="Yamanishi H."/>
            <person name="Zabarovsky E."/>
            <person name="Zhu S."/>
            <person name="Zimmer A."/>
            <person name="Hide W."/>
            <person name="Bult C."/>
            <person name="Grimmond S.M."/>
            <person name="Teasdale R.D."/>
            <person name="Liu E.T."/>
            <person name="Brusic V."/>
            <person name="Quackenbush J."/>
            <person name="Wahlestedt C."/>
            <person name="Mattick J.S."/>
            <person name="Hume D.A."/>
            <person name="Kai C."/>
            <person name="Sasaki D."/>
            <person name="Tomaru Y."/>
            <person name="Fukuda S."/>
            <person name="Kanamori-Katayama M."/>
            <person name="Suzuki M."/>
            <person name="Aoki J."/>
            <person name="Arakawa T."/>
            <person name="Iida J."/>
            <person name="Imamura K."/>
            <person name="Itoh M."/>
            <person name="Kato T."/>
            <person name="Kawaji H."/>
            <person name="Kawagashira N."/>
            <person name="Kawashima T."/>
            <person name="Kojima M."/>
            <person name="Kondo S."/>
            <person name="Konno H."/>
            <person name="Nakano K."/>
            <person name="Ninomiya N."/>
            <person name="Nishio T."/>
            <person name="Okada M."/>
            <person name="Plessy C."/>
            <person name="Shibata K."/>
            <person name="Shiraki T."/>
            <person name="Suzuki S."/>
            <person name="Tagami M."/>
            <person name="Waki K."/>
            <person name="Watahiki A."/>
            <person name="Okamura-Oho Y."/>
            <person name="Suzuki H."/>
            <person name="Kawai J."/>
            <person name="Hayashizaki Y."/>
        </authorList>
    </citation>
    <scope>NUCLEOTIDE SEQUENCE [LARGE SCALE MRNA]</scope>
    <source>
        <strain>NOD</strain>
        <tissue>Dendritic cell</tissue>
    </source>
</reference>
<reference key="2">
    <citation type="journal article" date="2004" name="Genome Res.">
        <title>The status, quality, and expansion of the NIH full-length cDNA project: the Mammalian Gene Collection (MGC).</title>
        <authorList>
            <consortium name="The MGC Project Team"/>
        </authorList>
    </citation>
    <scope>NUCLEOTIDE SEQUENCE [LARGE SCALE MRNA]</scope>
    <source>
        <strain>FVB/N</strain>
        <tissue>Kidney</tissue>
    </source>
</reference>
<reference key="3">
    <citation type="journal article" date="2010" name="Cell">
        <title>A tissue-specific atlas of mouse protein phosphorylation and expression.</title>
        <authorList>
            <person name="Huttlin E.L."/>
            <person name="Jedrychowski M.P."/>
            <person name="Elias J.E."/>
            <person name="Goswami T."/>
            <person name="Rad R."/>
            <person name="Beausoleil S.A."/>
            <person name="Villen J."/>
            <person name="Haas W."/>
            <person name="Sowa M.E."/>
            <person name="Gygi S.P."/>
        </authorList>
    </citation>
    <scope>PHOSPHORYLATION [LARGE SCALE ANALYSIS] AT SER-17; SER-23; SER-27; THR-35; SER-36; SER-86; SER-93; SER-107 AND SER-191</scope>
    <scope>IDENTIFICATION BY MASS SPECTROMETRY [LARGE SCALE ANALYSIS]</scope>
    <source>
        <tissue>Brown adipose tissue</tissue>
        <tissue>Heart</tissue>
        <tissue>Kidney</tissue>
        <tissue>Liver</tissue>
        <tissue>Lung</tissue>
        <tissue>Pancreas</tissue>
        <tissue>Testis</tissue>
    </source>
</reference>
<protein>
    <recommendedName>
        <fullName>Zinc finger protein 768</fullName>
    </recommendedName>
</protein>
<keyword id="KW-0158">Chromosome</keyword>
<keyword id="KW-0238">DNA-binding</keyword>
<keyword id="KW-0479">Metal-binding</keyword>
<keyword id="KW-0539">Nucleus</keyword>
<keyword id="KW-0597">Phosphoprotein</keyword>
<keyword id="KW-1185">Reference proteome</keyword>
<keyword id="KW-0677">Repeat</keyword>
<keyword id="KW-0804">Transcription</keyword>
<keyword id="KW-0805">Transcription regulation</keyword>
<keyword id="KW-0862">Zinc</keyword>
<keyword id="KW-0863">Zinc-finger</keyword>
<dbReference type="EMBL" id="AK155155">
    <property type="protein sequence ID" value="BAE33082.1"/>
    <property type="molecule type" value="mRNA"/>
</dbReference>
<dbReference type="EMBL" id="BC026432">
    <property type="protein sequence ID" value="AAH26432.1"/>
    <property type="molecule type" value="mRNA"/>
</dbReference>
<dbReference type="CCDS" id="CCDS21864.1"/>
<dbReference type="RefSeq" id="NP_666314.1">
    <property type="nucleotide sequence ID" value="NM_146202.1"/>
</dbReference>
<dbReference type="SMR" id="Q8R0T2"/>
<dbReference type="BioGRID" id="231467">
    <property type="interactions" value="28"/>
</dbReference>
<dbReference type="FunCoup" id="Q8R0T2">
    <property type="interactions" value="113"/>
</dbReference>
<dbReference type="IntAct" id="Q8R0T2">
    <property type="interactions" value="5"/>
</dbReference>
<dbReference type="STRING" id="10090.ENSMUSP00000055374"/>
<dbReference type="iPTMnet" id="Q8R0T2"/>
<dbReference type="PhosphoSitePlus" id="Q8R0T2"/>
<dbReference type="SwissPalm" id="Q8R0T2"/>
<dbReference type="jPOST" id="Q8R0T2"/>
<dbReference type="PaxDb" id="10090-ENSMUSP00000055374"/>
<dbReference type="PeptideAtlas" id="Q8R0T2"/>
<dbReference type="ProteomicsDB" id="299599"/>
<dbReference type="Pumba" id="Q8R0T2"/>
<dbReference type="Antibodypedia" id="13715">
    <property type="antibodies" value="129 antibodies from 20 providers"/>
</dbReference>
<dbReference type="DNASU" id="233890"/>
<dbReference type="Ensembl" id="ENSMUST00000060783.7">
    <property type="protein sequence ID" value="ENSMUSP00000055374.6"/>
    <property type="gene ID" value="ENSMUSG00000047371.8"/>
</dbReference>
<dbReference type="GeneID" id="233890"/>
<dbReference type="KEGG" id="mmu:233890"/>
<dbReference type="UCSC" id="uc009jvc.1">
    <property type="organism name" value="mouse"/>
</dbReference>
<dbReference type="AGR" id="MGI:2384582"/>
<dbReference type="CTD" id="233890"/>
<dbReference type="MGI" id="MGI:2384582">
    <property type="gene designation" value="Zfp768"/>
</dbReference>
<dbReference type="VEuPathDB" id="HostDB:ENSMUSG00000047371"/>
<dbReference type="eggNOG" id="KOG1721">
    <property type="taxonomic scope" value="Eukaryota"/>
</dbReference>
<dbReference type="GeneTree" id="ENSGT00940000162267"/>
<dbReference type="HOGENOM" id="CLU_002678_81_0_1"/>
<dbReference type="InParanoid" id="Q8R0T2"/>
<dbReference type="OMA" id="SPQFEML"/>
<dbReference type="OrthoDB" id="1095242at2759"/>
<dbReference type="PhylomeDB" id="Q8R0T2"/>
<dbReference type="TreeFam" id="TF350793"/>
<dbReference type="BioGRID-ORCS" id="233890">
    <property type="hits" value="2 hits in 79 CRISPR screens"/>
</dbReference>
<dbReference type="PRO" id="PR:Q8R0T2"/>
<dbReference type="Proteomes" id="UP000000589">
    <property type="component" value="Chromosome 7"/>
</dbReference>
<dbReference type="RNAct" id="Q8R0T2">
    <property type="molecule type" value="protein"/>
</dbReference>
<dbReference type="Bgee" id="ENSMUSG00000047371">
    <property type="expression patterns" value="Expressed in dorsal pancreas and 199 other cell types or tissues"/>
</dbReference>
<dbReference type="ExpressionAtlas" id="Q8R0T2">
    <property type="expression patterns" value="baseline and differential"/>
</dbReference>
<dbReference type="GO" id="GO:0005694">
    <property type="term" value="C:chromosome"/>
    <property type="evidence" value="ECO:0007669"/>
    <property type="project" value="UniProtKB-SubCell"/>
</dbReference>
<dbReference type="GO" id="GO:0005634">
    <property type="term" value="C:nucleus"/>
    <property type="evidence" value="ECO:0007669"/>
    <property type="project" value="UniProtKB-SubCell"/>
</dbReference>
<dbReference type="GO" id="GO:1990837">
    <property type="term" value="F:sequence-specific double-stranded DNA binding"/>
    <property type="evidence" value="ECO:0000250"/>
    <property type="project" value="UniProtKB"/>
</dbReference>
<dbReference type="GO" id="GO:0008270">
    <property type="term" value="F:zinc ion binding"/>
    <property type="evidence" value="ECO:0007669"/>
    <property type="project" value="UniProtKB-KW"/>
</dbReference>
<dbReference type="GO" id="GO:0006366">
    <property type="term" value="P:transcription by RNA polymerase II"/>
    <property type="evidence" value="ECO:0007669"/>
    <property type="project" value="InterPro"/>
</dbReference>
<dbReference type="FunFam" id="3.30.160.60:FF:000322">
    <property type="entry name" value="GDNF-inducible zinc finger protein 1"/>
    <property type="match status" value="1"/>
</dbReference>
<dbReference type="FunFam" id="3.30.160.60:FF:000953">
    <property type="entry name" value="Zinc finger protein 691"/>
    <property type="match status" value="2"/>
</dbReference>
<dbReference type="FunFam" id="3.30.160.60:FF:000710">
    <property type="entry name" value="Zinc finger protein 768"/>
    <property type="match status" value="1"/>
</dbReference>
<dbReference type="FunFam" id="3.30.160.60:FF:000775">
    <property type="entry name" value="Zinc finger protein 768"/>
    <property type="match status" value="1"/>
</dbReference>
<dbReference type="FunFam" id="3.30.160.60:FF:000972">
    <property type="entry name" value="Zinc finger protein 768"/>
    <property type="match status" value="1"/>
</dbReference>
<dbReference type="FunFam" id="3.30.160.60:FF:001784">
    <property type="entry name" value="Zinc finger protein 768"/>
    <property type="match status" value="1"/>
</dbReference>
<dbReference type="FunFam" id="3.30.160.60:FF:000336">
    <property type="entry name" value="zinc finger protein 768"/>
    <property type="match status" value="1"/>
</dbReference>
<dbReference type="FunFam" id="3.30.160.60:FF:000628">
    <property type="entry name" value="zinc finger protein 768"/>
    <property type="match status" value="1"/>
</dbReference>
<dbReference type="FunFam" id="3.30.160.60:FF:001051">
    <property type="entry name" value="zinc finger protein 768"/>
    <property type="match status" value="1"/>
</dbReference>
<dbReference type="Gene3D" id="3.30.160.60">
    <property type="entry name" value="Classic Zinc Finger"/>
    <property type="match status" value="10"/>
</dbReference>
<dbReference type="InterPro" id="IPR000684">
    <property type="entry name" value="RNA_pol_II_repeat_euk"/>
</dbReference>
<dbReference type="InterPro" id="IPR036236">
    <property type="entry name" value="Znf_C2H2_sf"/>
</dbReference>
<dbReference type="InterPro" id="IPR013087">
    <property type="entry name" value="Znf_C2H2_type"/>
</dbReference>
<dbReference type="PANTHER" id="PTHR23235">
    <property type="entry name" value="KRUEPPEL-LIKE TRANSCRIPTION FACTOR"/>
    <property type="match status" value="1"/>
</dbReference>
<dbReference type="PANTHER" id="PTHR23235:SF142">
    <property type="entry name" value="ZINC FINGER PROTEIN 384"/>
    <property type="match status" value="1"/>
</dbReference>
<dbReference type="Pfam" id="PF05001">
    <property type="entry name" value="RNA_pol_Rpb1_R"/>
    <property type="match status" value="4"/>
</dbReference>
<dbReference type="Pfam" id="PF00096">
    <property type="entry name" value="zf-C2H2"/>
    <property type="match status" value="10"/>
</dbReference>
<dbReference type="SMART" id="SM00355">
    <property type="entry name" value="ZnF_C2H2"/>
    <property type="match status" value="10"/>
</dbReference>
<dbReference type="SUPFAM" id="SSF57667">
    <property type="entry name" value="beta-beta-alpha zinc fingers"/>
    <property type="match status" value="6"/>
</dbReference>
<dbReference type="PROSITE" id="PS00028">
    <property type="entry name" value="ZINC_FINGER_C2H2_1"/>
    <property type="match status" value="10"/>
</dbReference>
<dbReference type="PROSITE" id="PS50157">
    <property type="entry name" value="ZINC_FINGER_C2H2_2"/>
    <property type="match status" value="10"/>
</dbReference>
<proteinExistence type="evidence at protein level"/>
<name>ZN768_MOUSE</name>
<feature type="chain" id="PRO_0000304409" description="Zinc finger protein 768">
    <location>
        <begin position="1"/>
        <end position="568"/>
    </location>
</feature>
<feature type="zinc finger region" description="C2H2-type 1" evidence="2">
    <location>
        <begin position="289"/>
        <end position="311"/>
    </location>
</feature>
<feature type="zinc finger region" description="C2H2-type 2" evidence="2">
    <location>
        <begin position="317"/>
        <end position="339"/>
    </location>
</feature>
<feature type="zinc finger region" description="C2H2-type 3" evidence="2">
    <location>
        <begin position="345"/>
        <end position="367"/>
    </location>
</feature>
<feature type="zinc finger region" description="C2H2-type 4" evidence="2">
    <location>
        <begin position="373"/>
        <end position="395"/>
    </location>
</feature>
<feature type="zinc finger region" description="C2H2-type 5" evidence="2">
    <location>
        <begin position="401"/>
        <end position="423"/>
    </location>
</feature>
<feature type="zinc finger region" description="C2H2-type 6" evidence="2">
    <location>
        <begin position="429"/>
        <end position="451"/>
    </location>
</feature>
<feature type="zinc finger region" description="C2H2-type 7" evidence="2">
    <location>
        <begin position="457"/>
        <end position="479"/>
    </location>
</feature>
<feature type="zinc finger region" description="C2H2-type 8" evidence="2">
    <location>
        <begin position="485"/>
        <end position="507"/>
    </location>
</feature>
<feature type="zinc finger region" description="C2H2-type 9" evidence="2">
    <location>
        <begin position="513"/>
        <end position="535"/>
    </location>
</feature>
<feature type="zinc finger region" description="C2H2-type 10" evidence="2">
    <location>
        <begin position="541"/>
        <end position="563"/>
    </location>
</feature>
<feature type="region of interest" description="Disordered" evidence="3">
    <location>
        <begin position="1"/>
        <end position="223"/>
    </location>
</feature>
<feature type="region of interest" description="Disordered" evidence="3">
    <location>
        <begin position="228"/>
        <end position="247"/>
    </location>
</feature>
<feature type="region of interest" description="Disordered" evidence="3">
    <location>
        <begin position="264"/>
        <end position="287"/>
    </location>
</feature>
<feature type="compositionally biased region" description="Basic and acidic residues" evidence="3">
    <location>
        <begin position="1"/>
        <end position="16"/>
    </location>
</feature>
<feature type="compositionally biased region" description="Low complexity" evidence="3">
    <location>
        <begin position="62"/>
        <end position="80"/>
    </location>
</feature>
<feature type="compositionally biased region" description="Polar residues" evidence="3">
    <location>
        <begin position="110"/>
        <end position="122"/>
    </location>
</feature>
<feature type="compositionally biased region" description="Polar residues" evidence="3">
    <location>
        <begin position="159"/>
        <end position="186"/>
    </location>
</feature>
<feature type="modified residue" description="Phosphoserine" evidence="5">
    <location>
        <position position="17"/>
    </location>
</feature>
<feature type="modified residue" description="Phosphoserine" evidence="5">
    <location>
        <position position="23"/>
    </location>
</feature>
<feature type="modified residue" description="Phosphoserine" evidence="5">
    <location>
        <position position="27"/>
    </location>
</feature>
<feature type="modified residue" description="Phosphothreonine" evidence="5">
    <location>
        <position position="35"/>
    </location>
</feature>
<feature type="modified residue" description="Phosphoserine" evidence="5">
    <location>
        <position position="36"/>
    </location>
</feature>
<feature type="modified residue" description="Phosphoserine" evidence="1">
    <location>
        <position position="65"/>
    </location>
</feature>
<feature type="modified residue" description="Phosphoserine" evidence="1">
    <location>
        <position position="72"/>
    </location>
</feature>
<feature type="modified residue" description="Phosphoserine" evidence="1">
    <location>
        <position position="79"/>
    </location>
</feature>
<feature type="modified residue" description="Phosphoserine" evidence="5">
    <location>
        <position position="86"/>
    </location>
</feature>
<feature type="modified residue" description="Phosphoserine" evidence="5">
    <location>
        <position position="93"/>
    </location>
</feature>
<feature type="modified residue" description="Phosphoserine" evidence="1">
    <location>
        <position position="100"/>
    </location>
</feature>
<feature type="modified residue" description="Phosphoserine" evidence="5">
    <location>
        <position position="107"/>
    </location>
</feature>
<feature type="modified residue" description="Phosphoserine" evidence="1">
    <location>
        <position position="114"/>
    </location>
</feature>
<feature type="modified residue" description="Phosphoserine" evidence="1">
    <location>
        <position position="121"/>
    </location>
</feature>
<feature type="modified residue" description="Phosphoserine" evidence="1">
    <location>
        <position position="128"/>
    </location>
</feature>
<feature type="modified residue" description="Phosphoserine" evidence="1">
    <location>
        <position position="135"/>
    </location>
</feature>
<feature type="modified residue" description="Phosphoserine" evidence="1">
    <location>
        <position position="149"/>
    </location>
</feature>
<feature type="modified residue" description="Phosphotyrosine" evidence="1">
    <location>
        <position position="152"/>
    </location>
</feature>
<feature type="modified residue" description="Phosphoserine" evidence="1">
    <location>
        <position position="154"/>
    </location>
</feature>
<feature type="modified residue" description="Phosphothreonine" evidence="1">
    <location>
        <position position="189"/>
    </location>
</feature>
<feature type="modified residue" description="Phosphoserine" evidence="5">
    <location>
        <position position="191"/>
    </location>
</feature>
<feature type="modified residue" description="Phosphothreonine" evidence="1">
    <location>
        <position position="312"/>
    </location>
</feature>
<feature type="modified residue" description="Phosphotyrosine" evidence="1">
    <location>
        <position position="317"/>
    </location>
</feature>
<feature type="modified residue" description="Phosphoserine" evidence="1">
    <location>
        <position position="323"/>
    </location>
</feature>
<feature type="modified residue" description="Phosphoserine" evidence="1">
    <location>
        <position position="327"/>
    </location>
</feature>
<feature type="modified residue" description="Phosphothreonine" evidence="1">
    <location>
        <position position="424"/>
    </location>
</feature>
<feature type="modified residue" description="Phosphoserine" evidence="1">
    <location>
        <position position="470"/>
    </location>
</feature>
<sequence>MEREASSWGLESRDVHSPNAVGSPEGSLKDPAGNTSENEEGEISQREGNGDYEVEEIPFGLEPQSPEFEPQSPEFESQSPRFEPESPGFESRSPGFVPPSPEFAPRSPESDPQSPEFESQSPKYEPRSPGCHPRSPGCEPGSPRYEPKSPGYGSKSPEFESQSPGYESQSPGYEPQNSGDGVQNSEFKTHSPEFETQSSKFQEGAEMPLSPEEKNPLSISLGVHPLDSFTQGFGEQPTGALPPFDMPSGALLAAPQFEMLQNPLNLTGTLRGPGRRGGRARGGQGPRPNICGICGKSFGRGSTLIQHQRIHTGEKPYKCEVCSKAFSQSSDLIKHQRTHTGERPYKCPRCGKAFADSSYLLRHQRTHSGQKPYKCPHCGKAFGDSSYLLRHQRTHSHERPYSCPECGKCYSQNSSLRSHQRVHTGQRPFSCGICGKSFSQRSALIPHARSHAREKPFKCPECGKRFGQSSVLAIHARTHLPGRTYSCPDCGKTFNRSSTLIQHQRSHTGERPYRCAVCGKGFCRSSTLLQHHRVHSGERPYKCDDCGKAFSQSSDLIRHQRTHAAGRR</sequence>
<accession>Q8R0T2</accession>
<evidence type="ECO:0000250" key="1">
    <source>
        <dbReference type="UniProtKB" id="Q9H5H4"/>
    </source>
</evidence>
<evidence type="ECO:0000255" key="2">
    <source>
        <dbReference type="PROSITE-ProRule" id="PRU00042"/>
    </source>
</evidence>
<evidence type="ECO:0000256" key="3">
    <source>
        <dbReference type="SAM" id="MobiDB-lite"/>
    </source>
</evidence>
<evidence type="ECO:0000305" key="4"/>
<evidence type="ECO:0007744" key="5">
    <source>
    </source>
</evidence>
<gene>
    <name type="primary">Znf768</name>
    <name type="synonym">Zfp768</name>
</gene>
<comment type="function">
    <text evidence="1 4">Binds to mammalian-wide interspersed repeat (MIRs) sequences in euchromatin and promoter regions of genes at the consensus sequence 5'-GCTGTGTG-[N20]-CCTCTCTG-3', consisting of two anchor regions connected by a linker region; the linker region probably does not contribute to the binding specificity (By similarity). Required for cell homeostasis (By similarity). May be involved in transcriptional regulation (Probable).</text>
</comment>
<comment type="subunit">
    <text evidence="1">Interacts (via zinc-finger domains) with TP53 (via N-terminus); interaction might be facilitated by TP53 oligomerization state (By similarity). Interacts with ELP3 (By similarity).</text>
</comment>
<comment type="subcellular location">
    <subcellularLocation>
        <location evidence="1">Nucleus</location>
    </subcellularLocation>
    <subcellularLocation>
        <location evidence="1">Chromosome</location>
    </subcellularLocation>
    <text evidence="1">Localizes to euchromatin.</text>
</comment>
<comment type="PTM">
    <text evidence="1">May be phosphorylated at residue 'Ser-5' of the tandem heptapeptide repeats in the N-terminus (By similarity). Phosphorylation might be increased upon RAS pathway activation and negatively regulate protein stability (By similarity).</text>
</comment>
<comment type="similarity">
    <text evidence="4">Belongs to the krueppel C2H2-type zinc-finger protein family.</text>
</comment>